<evidence type="ECO:0000250" key="1">
    <source>
        <dbReference type="UniProtKB" id="Q15631"/>
    </source>
</evidence>
<evidence type="ECO:0000250" key="2">
    <source>
        <dbReference type="UniProtKB" id="Q62348"/>
    </source>
</evidence>
<evidence type="ECO:0000255" key="3"/>
<evidence type="ECO:0000305" key="4"/>
<gene>
    <name type="primary">TSN</name>
</gene>
<accession>P79769</accession>
<name>TSN_CHICK</name>
<keyword id="KW-0963">Cytoplasm</keyword>
<keyword id="KW-0238">DNA-binding</keyword>
<keyword id="KW-0255">Endonuclease</keyword>
<keyword id="KW-0378">Hydrolase</keyword>
<keyword id="KW-0540">Nuclease</keyword>
<keyword id="KW-0539">Nucleus</keyword>
<keyword id="KW-1185">Reference proteome</keyword>
<keyword id="KW-0694">RNA-binding</keyword>
<dbReference type="EC" id="3.1.-.-" evidence="2"/>
<dbReference type="EMBL" id="X95074">
    <property type="protein sequence ID" value="CAA64470.1"/>
    <property type="molecule type" value="mRNA"/>
</dbReference>
<dbReference type="RefSeq" id="NP_990404.1">
    <property type="nucleotide sequence ID" value="NM_205073.1"/>
</dbReference>
<dbReference type="SMR" id="P79769"/>
<dbReference type="FunCoup" id="P79769">
    <property type="interactions" value="3674"/>
</dbReference>
<dbReference type="STRING" id="9031.ENSGALP00000019018"/>
<dbReference type="PaxDb" id="9031-ENSGALP00000019018"/>
<dbReference type="GeneID" id="395955"/>
<dbReference type="KEGG" id="gga:395955"/>
<dbReference type="CTD" id="7247"/>
<dbReference type="VEuPathDB" id="HostDB:geneid_395955"/>
<dbReference type="eggNOG" id="KOG3067">
    <property type="taxonomic scope" value="Eukaryota"/>
</dbReference>
<dbReference type="InParanoid" id="P79769"/>
<dbReference type="OrthoDB" id="829at2759"/>
<dbReference type="PhylomeDB" id="P79769"/>
<dbReference type="PRO" id="PR:P79769"/>
<dbReference type="Proteomes" id="UP000000539">
    <property type="component" value="Unassembled WGS sequence"/>
</dbReference>
<dbReference type="GO" id="GO:0005737">
    <property type="term" value="C:cytoplasm"/>
    <property type="evidence" value="ECO:0000318"/>
    <property type="project" value="GO_Central"/>
</dbReference>
<dbReference type="GO" id="GO:0005634">
    <property type="term" value="C:nucleus"/>
    <property type="evidence" value="ECO:0000318"/>
    <property type="project" value="GO_Central"/>
</dbReference>
<dbReference type="GO" id="GO:0004519">
    <property type="term" value="F:endonuclease activity"/>
    <property type="evidence" value="ECO:0007669"/>
    <property type="project" value="UniProtKB-KW"/>
</dbReference>
<dbReference type="GO" id="GO:0003723">
    <property type="term" value="F:RNA binding"/>
    <property type="evidence" value="ECO:0000318"/>
    <property type="project" value="GO_Central"/>
</dbReference>
<dbReference type="GO" id="GO:0043565">
    <property type="term" value="F:sequence-specific DNA binding"/>
    <property type="evidence" value="ECO:0007669"/>
    <property type="project" value="InterPro"/>
</dbReference>
<dbReference type="GO" id="GO:0003697">
    <property type="term" value="F:single-stranded DNA binding"/>
    <property type="evidence" value="ECO:0007669"/>
    <property type="project" value="InterPro"/>
</dbReference>
<dbReference type="GO" id="GO:0016070">
    <property type="term" value="P:RNA metabolic process"/>
    <property type="evidence" value="ECO:0007669"/>
    <property type="project" value="InterPro"/>
</dbReference>
<dbReference type="CDD" id="cd14819">
    <property type="entry name" value="Translin"/>
    <property type="match status" value="1"/>
</dbReference>
<dbReference type="FunFam" id="1.20.58.200:FF:000002">
    <property type="entry name" value="Putative translin"/>
    <property type="match status" value="1"/>
</dbReference>
<dbReference type="FunFam" id="1.20.58.190:FF:000001">
    <property type="entry name" value="Translin"/>
    <property type="match status" value="1"/>
</dbReference>
<dbReference type="Gene3D" id="1.20.58.190">
    <property type="entry name" value="Translin, domain 1"/>
    <property type="match status" value="1"/>
</dbReference>
<dbReference type="Gene3D" id="1.20.58.200">
    <property type="entry name" value="Translin, domain 2"/>
    <property type="match status" value="1"/>
</dbReference>
<dbReference type="InterPro" id="IPR033956">
    <property type="entry name" value="Translin"/>
</dbReference>
<dbReference type="InterPro" id="IPR016069">
    <property type="entry name" value="Translin_C"/>
</dbReference>
<dbReference type="InterPro" id="IPR002848">
    <property type="entry name" value="Translin_fam"/>
</dbReference>
<dbReference type="InterPro" id="IPR016068">
    <property type="entry name" value="Translin_N"/>
</dbReference>
<dbReference type="InterPro" id="IPR036081">
    <property type="entry name" value="Translin_sf"/>
</dbReference>
<dbReference type="PANTHER" id="PTHR10741">
    <property type="entry name" value="TRANSLIN AND TRANSLIN ASSOCIATED PROTEIN X"/>
    <property type="match status" value="1"/>
</dbReference>
<dbReference type="Pfam" id="PF01997">
    <property type="entry name" value="Translin"/>
    <property type="match status" value="1"/>
</dbReference>
<dbReference type="SUPFAM" id="SSF74784">
    <property type="entry name" value="Translin"/>
    <property type="match status" value="1"/>
</dbReference>
<proteinExistence type="evidence at protein level"/>
<sequence length="229" mass="25961">MSVSAMFVALQGALTADQDIREEIRKVVQALEQTAREMLTLPQGVHQGAGFQDIPKKCQKAREHFGTVRTQMESLKTKFPADQYYRFHEHWRFVLQRLVFLASFVVYLETETLVTREAVAEILGIEADRERGFHLDIEDYLSGVLTLASELARLAVNSVTAGDYSRPLRISTFINELDSGFRLLNLKNDSLRKRYDGLKYDVKKIEEVVYDLSIRGLNKEATGGAGGEK</sequence>
<feature type="chain" id="PRO_0000191685" description="Translin">
    <location>
        <begin position="1"/>
        <end position="229"/>
    </location>
</feature>
<feature type="region of interest" description="DNA/RNA binding">
    <location>
        <begin position="86"/>
        <end position="90"/>
    </location>
</feature>
<feature type="region of interest" description="Leucine-zipper" evidence="3">
    <location>
        <begin position="177"/>
        <end position="198"/>
    </location>
</feature>
<organism>
    <name type="scientific">Gallus gallus</name>
    <name type="common">Chicken</name>
    <dbReference type="NCBI Taxonomy" id="9031"/>
    <lineage>
        <taxon>Eukaryota</taxon>
        <taxon>Metazoa</taxon>
        <taxon>Chordata</taxon>
        <taxon>Craniata</taxon>
        <taxon>Vertebrata</taxon>
        <taxon>Euteleostomi</taxon>
        <taxon>Archelosauria</taxon>
        <taxon>Archosauria</taxon>
        <taxon>Dinosauria</taxon>
        <taxon>Saurischia</taxon>
        <taxon>Theropoda</taxon>
        <taxon>Coelurosauria</taxon>
        <taxon>Aves</taxon>
        <taxon>Neognathae</taxon>
        <taxon>Galloanserae</taxon>
        <taxon>Galliformes</taxon>
        <taxon>Phasianidae</taxon>
        <taxon>Phasianinae</taxon>
        <taxon>Gallus</taxon>
    </lineage>
</organism>
<comment type="function">
    <text evidence="2">Exhibits both single-stranded and double-stranded endoribonuclease activity. May act as an activator of RNA-induced silencing complex (RISC) by facilitating endonucleolytic cleavage of the siRNA passenger strand.</text>
</comment>
<comment type="function">
    <text evidence="1">DNA-binding protein that specifically recognizes consensus sequences at the breakpoint junctions in chromosomal translocations, mostly involving immunoglobulin (Ig)/T-cell receptor gene segments. Seems to recognize single-stranded DNA ends generated by staggered breaks occurring at recombination hot spots.</text>
</comment>
<comment type="subunit">
    <text evidence="1">Ring-shaped heterooctamer of six TSN and two TSNAX subunits, DNA/RNA binding occurs inside the ring.</text>
</comment>
<comment type="subcellular location">
    <subcellularLocation>
        <location evidence="1">Cytoplasm</location>
    </subcellularLocation>
    <subcellularLocation>
        <location evidence="1">Nucleus</location>
    </subcellularLocation>
</comment>
<comment type="similarity">
    <text evidence="4">Belongs to the translin family.</text>
</comment>
<protein>
    <recommendedName>
        <fullName>Translin</fullName>
        <ecNumber evidence="2">3.1.-.-</ecNumber>
    </recommendedName>
    <alternativeName>
        <fullName>Component 3 of promoter of RISC</fullName>
        <shortName>C3PO</shortName>
    </alternativeName>
</protein>
<reference key="1">
    <citation type="submission" date="1996-01" db="EMBL/GenBank/DDBJ databases">
        <authorList>
            <person name="Kasai M."/>
        </authorList>
    </citation>
    <scope>NUCLEOTIDE SEQUENCE [MRNA]</scope>
    <source>
        <tissue>Thymus</tissue>
    </source>
</reference>
<reference key="2">
    <citation type="journal article" date="1999" name="FEBS Lett.">
        <title>The DNA binding activity of Translin is mediated by a basic region in the ring-shaped structure conserved in evolution.</title>
        <authorList>
            <person name="Aoki K."/>
            <person name="Suzuki K."/>
            <person name="Ishida R."/>
            <person name="Kasai M."/>
        </authorList>
    </citation>
    <scope>DNA/RNA-BINDING REGION</scope>
</reference>